<reference key="1">
    <citation type="journal article" date="2005" name="J. Bacteriol.">
        <title>Completion of the genome sequence of Brucella abortus and comparison to the highly similar genomes of Brucella melitensis and Brucella suis.</title>
        <authorList>
            <person name="Halling S.M."/>
            <person name="Peterson-Burch B.D."/>
            <person name="Bricker B.J."/>
            <person name="Zuerner R.L."/>
            <person name="Qing Z."/>
            <person name="Li L.-L."/>
            <person name="Kapur V."/>
            <person name="Alt D.P."/>
            <person name="Olsen S.C."/>
        </authorList>
    </citation>
    <scope>NUCLEOTIDE SEQUENCE [LARGE SCALE GENOMIC DNA]</scope>
    <source>
        <strain>9-941</strain>
    </source>
</reference>
<evidence type="ECO:0000255" key="1">
    <source>
        <dbReference type="HAMAP-Rule" id="MF_00291"/>
    </source>
</evidence>
<evidence type="ECO:0000305" key="2"/>
<dbReference type="EMBL" id="AE017223">
    <property type="protein sequence ID" value="AAX74507.1"/>
    <property type="molecule type" value="Genomic_DNA"/>
</dbReference>
<dbReference type="RefSeq" id="WP_002964289.1">
    <property type="nucleotide sequence ID" value="NC_006932.1"/>
</dbReference>
<dbReference type="SMR" id="Q57CX7"/>
<dbReference type="EnsemblBacteria" id="AAX74507">
    <property type="protein sequence ID" value="AAX74507"/>
    <property type="gene ID" value="BruAb1_1168"/>
</dbReference>
<dbReference type="GeneID" id="97533588"/>
<dbReference type="KEGG" id="bmb:BruAb1_1168"/>
<dbReference type="HOGENOM" id="CLU_040318_2_1_5"/>
<dbReference type="Proteomes" id="UP000000540">
    <property type="component" value="Chromosome I"/>
</dbReference>
<dbReference type="GO" id="GO:0022627">
    <property type="term" value="C:cytosolic small ribosomal subunit"/>
    <property type="evidence" value="ECO:0007669"/>
    <property type="project" value="TreeGrafter"/>
</dbReference>
<dbReference type="GO" id="GO:0003735">
    <property type="term" value="F:structural constituent of ribosome"/>
    <property type="evidence" value="ECO:0007669"/>
    <property type="project" value="InterPro"/>
</dbReference>
<dbReference type="GO" id="GO:0006412">
    <property type="term" value="P:translation"/>
    <property type="evidence" value="ECO:0007669"/>
    <property type="project" value="UniProtKB-UniRule"/>
</dbReference>
<dbReference type="CDD" id="cd01425">
    <property type="entry name" value="RPS2"/>
    <property type="match status" value="1"/>
</dbReference>
<dbReference type="FunFam" id="1.10.287.610:FF:000001">
    <property type="entry name" value="30S ribosomal protein S2"/>
    <property type="match status" value="1"/>
</dbReference>
<dbReference type="Gene3D" id="3.40.50.10490">
    <property type="entry name" value="Glucose-6-phosphate isomerase like protein, domain 1"/>
    <property type="match status" value="1"/>
</dbReference>
<dbReference type="Gene3D" id="1.10.287.610">
    <property type="entry name" value="Helix hairpin bin"/>
    <property type="match status" value="1"/>
</dbReference>
<dbReference type="HAMAP" id="MF_00291_B">
    <property type="entry name" value="Ribosomal_uS2_B"/>
    <property type="match status" value="1"/>
</dbReference>
<dbReference type="InterPro" id="IPR001865">
    <property type="entry name" value="Ribosomal_uS2"/>
</dbReference>
<dbReference type="InterPro" id="IPR005706">
    <property type="entry name" value="Ribosomal_uS2_bac/mit/plastid"/>
</dbReference>
<dbReference type="InterPro" id="IPR018130">
    <property type="entry name" value="Ribosomal_uS2_CS"/>
</dbReference>
<dbReference type="InterPro" id="IPR023591">
    <property type="entry name" value="Ribosomal_uS2_flav_dom_sf"/>
</dbReference>
<dbReference type="NCBIfam" id="TIGR01011">
    <property type="entry name" value="rpsB_bact"/>
    <property type="match status" value="1"/>
</dbReference>
<dbReference type="PANTHER" id="PTHR12534">
    <property type="entry name" value="30S RIBOSOMAL PROTEIN S2 PROKARYOTIC AND ORGANELLAR"/>
    <property type="match status" value="1"/>
</dbReference>
<dbReference type="PANTHER" id="PTHR12534:SF0">
    <property type="entry name" value="SMALL RIBOSOMAL SUBUNIT PROTEIN US2M"/>
    <property type="match status" value="1"/>
</dbReference>
<dbReference type="Pfam" id="PF00318">
    <property type="entry name" value="Ribosomal_S2"/>
    <property type="match status" value="1"/>
</dbReference>
<dbReference type="PRINTS" id="PR00395">
    <property type="entry name" value="RIBOSOMALS2"/>
</dbReference>
<dbReference type="SUPFAM" id="SSF52313">
    <property type="entry name" value="Ribosomal protein S2"/>
    <property type="match status" value="1"/>
</dbReference>
<dbReference type="PROSITE" id="PS00962">
    <property type="entry name" value="RIBOSOMAL_S2_1"/>
    <property type="match status" value="1"/>
</dbReference>
<dbReference type="PROSITE" id="PS00963">
    <property type="entry name" value="RIBOSOMAL_S2_2"/>
    <property type="match status" value="1"/>
</dbReference>
<organism>
    <name type="scientific">Brucella abortus biovar 1 (strain 9-941)</name>
    <dbReference type="NCBI Taxonomy" id="262698"/>
    <lineage>
        <taxon>Bacteria</taxon>
        <taxon>Pseudomonadati</taxon>
        <taxon>Pseudomonadota</taxon>
        <taxon>Alphaproteobacteria</taxon>
        <taxon>Hyphomicrobiales</taxon>
        <taxon>Brucellaceae</taxon>
        <taxon>Brucella/Ochrobactrum group</taxon>
        <taxon>Brucella</taxon>
    </lineage>
</organism>
<comment type="similarity">
    <text evidence="1">Belongs to the universal ribosomal protein uS2 family.</text>
</comment>
<sequence>MALPDFSMRQLLEAGVHFGHQTHRWNPKMAPFIYGERNNIHILDLSQTVPLLNSALKVVSDTVARGGRVLFVGTKRQASDIIADAANRSAQYYVNARWLGGMMTNWKTISNSIQRLRKLDELLAGEAQGFTKKERLNLEREREKLDRALGGIKDMGSVPDLMFIIDTNKEAIAIQEAKRLGIPVVAVIDSNCDPDQIDYPIPGNDDAARAIALYCDLIARAALDGIARQQGAMGIDVGAQVEAPVEPALQAPAEGA</sequence>
<protein>
    <recommendedName>
        <fullName evidence="1">Small ribosomal subunit protein uS2</fullName>
    </recommendedName>
    <alternativeName>
        <fullName evidence="2">30S ribosomal protein S2</fullName>
    </alternativeName>
</protein>
<name>RS2_BRUAB</name>
<accession>Q57CX7</accession>
<proteinExistence type="inferred from homology"/>
<feature type="chain" id="PRO_1000003904" description="Small ribosomal subunit protein uS2">
    <location>
        <begin position="1"/>
        <end position="256"/>
    </location>
</feature>
<gene>
    <name evidence="1" type="primary">rpsB</name>
    <name type="ordered locus">BruAb1_1168</name>
</gene>
<keyword id="KW-0687">Ribonucleoprotein</keyword>
<keyword id="KW-0689">Ribosomal protein</keyword>